<gene>
    <name type="primary">Ear</name>
</gene>
<protein>
    <recommendedName>
        <fullName>Arrestin-E</fullName>
    </recommendedName>
</protein>
<proteinExistence type="evidence at transcript level"/>
<feature type="chain" id="PRO_0000205210" description="Arrestin-E">
    <location>
        <begin position="1" status="less than"/>
        <end position="72"/>
    </location>
</feature>
<feature type="non-terminal residue">
    <location>
        <position position="1"/>
    </location>
</feature>
<keyword id="KW-1185">Reference proteome</keyword>
<keyword id="KW-0716">Sensory transduction</keyword>
<reference key="1">
    <citation type="journal article" date="1994" name="J. Biol. Chem.">
        <title>Cone arrestin identified by targeting expression of a functional family.</title>
        <authorList>
            <person name="Craft C.M."/>
            <person name="Whitmore D.H."/>
            <person name="Wiechmann A.F."/>
        </authorList>
    </citation>
    <scope>NUCLEOTIDE SEQUENCE [MRNA]</scope>
    <source>
        <strain>Sprague-Dawley</strain>
        <tissue>Pineal gland</tissue>
    </source>
</reference>
<accession>P37200</accession>
<organism>
    <name type="scientific">Rattus norvegicus</name>
    <name type="common">Rat</name>
    <dbReference type="NCBI Taxonomy" id="10116"/>
    <lineage>
        <taxon>Eukaryota</taxon>
        <taxon>Metazoa</taxon>
        <taxon>Chordata</taxon>
        <taxon>Craniata</taxon>
        <taxon>Vertebrata</taxon>
        <taxon>Euteleostomi</taxon>
        <taxon>Mammalia</taxon>
        <taxon>Eutheria</taxon>
        <taxon>Euarchontoglires</taxon>
        <taxon>Glires</taxon>
        <taxon>Rodentia</taxon>
        <taxon>Myomorpha</taxon>
        <taxon>Muroidea</taxon>
        <taxon>Muridae</taxon>
        <taxon>Murinae</taxon>
        <taxon>Rattus</taxon>
    </lineage>
</organism>
<comment type="tissue specificity">
    <text>Adrenal, cerebral cortex, heart, hypothalamus, intestine, liver, lung, pituitary, retina and testis.</text>
</comment>
<comment type="similarity">
    <text evidence="1">Belongs to the arrestin family.</text>
</comment>
<name>ARRE_RAT</name>
<sequence>LKHEDTNLHISSQCWLKCLKNSKHNVVISSRGGLLFLRGMSHHPKPPQLRAVWAQSQEEGAPFLVLPLVQKP</sequence>
<evidence type="ECO:0000305" key="1"/>
<dbReference type="EMBL" id="U03630">
    <property type="protein sequence ID" value="AAF67391.1"/>
    <property type="molecule type" value="mRNA"/>
</dbReference>
<dbReference type="SMR" id="P37200"/>
<dbReference type="AGR" id="RGD:1303011"/>
<dbReference type="RGD" id="708498">
    <property type="gene designation" value="LOC246218"/>
</dbReference>
<dbReference type="InParanoid" id="P37200"/>
<dbReference type="Proteomes" id="UP000002494">
    <property type="component" value="Unplaced"/>
</dbReference>